<dbReference type="EC" id="3.5.-.-" evidence="1"/>
<dbReference type="EMBL" id="CU928162">
    <property type="protein sequence ID" value="CAR07367.1"/>
    <property type="molecule type" value="Genomic_DNA"/>
</dbReference>
<dbReference type="RefSeq" id="WP_001126780.1">
    <property type="nucleotide sequence ID" value="NC_011745.1"/>
</dbReference>
<dbReference type="SMR" id="B7MTF3"/>
<dbReference type="GeneID" id="75171086"/>
<dbReference type="KEGG" id="ecq:ECED1_1166"/>
<dbReference type="HOGENOM" id="CLU_100715_7_3_6"/>
<dbReference type="Proteomes" id="UP000000748">
    <property type="component" value="Chromosome"/>
</dbReference>
<dbReference type="GO" id="GO:0005829">
    <property type="term" value="C:cytosol"/>
    <property type="evidence" value="ECO:0007669"/>
    <property type="project" value="TreeGrafter"/>
</dbReference>
<dbReference type="GO" id="GO:0019239">
    <property type="term" value="F:deaminase activity"/>
    <property type="evidence" value="ECO:0007669"/>
    <property type="project" value="TreeGrafter"/>
</dbReference>
<dbReference type="GO" id="GO:0019740">
    <property type="term" value="P:nitrogen utilization"/>
    <property type="evidence" value="ECO:0007669"/>
    <property type="project" value="UniProtKB-UniRule"/>
</dbReference>
<dbReference type="GO" id="GO:0006212">
    <property type="term" value="P:uracil catabolic process"/>
    <property type="evidence" value="ECO:0007669"/>
    <property type="project" value="UniProtKB-UniRule"/>
</dbReference>
<dbReference type="CDD" id="cd00448">
    <property type="entry name" value="YjgF_YER057c_UK114_family"/>
    <property type="match status" value="1"/>
</dbReference>
<dbReference type="FunFam" id="3.30.1330.40:FF:000003">
    <property type="entry name" value="Putative aminoacrylate peracid reductase RutC"/>
    <property type="match status" value="1"/>
</dbReference>
<dbReference type="Gene3D" id="3.30.1330.40">
    <property type="entry name" value="RutC-like"/>
    <property type="match status" value="1"/>
</dbReference>
<dbReference type="HAMAP" id="MF_00831">
    <property type="entry name" value="RutC"/>
    <property type="match status" value="1"/>
</dbReference>
<dbReference type="InterPro" id="IPR019897">
    <property type="entry name" value="RidA_CS"/>
</dbReference>
<dbReference type="InterPro" id="IPR019898">
    <property type="entry name" value="RutC"/>
</dbReference>
<dbReference type="InterPro" id="IPR035959">
    <property type="entry name" value="RutC-like_sf"/>
</dbReference>
<dbReference type="InterPro" id="IPR006175">
    <property type="entry name" value="YjgF/YER057c/UK114"/>
</dbReference>
<dbReference type="NCBIfam" id="TIGR03610">
    <property type="entry name" value="RutC"/>
    <property type="match status" value="1"/>
</dbReference>
<dbReference type="PANTHER" id="PTHR11803">
    <property type="entry name" value="2-IMINOBUTANOATE/2-IMINOPROPANOATE DEAMINASE RIDA"/>
    <property type="match status" value="1"/>
</dbReference>
<dbReference type="PANTHER" id="PTHR11803:SF58">
    <property type="entry name" value="PROTEIN HMF1-RELATED"/>
    <property type="match status" value="1"/>
</dbReference>
<dbReference type="Pfam" id="PF01042">
    <property type="entry name" value="Ribonuc_L-PSP"/>
    <property type="match status" value="1"/>
</dbReference>
<dbReference type="SUPFAM" id="SSF55298">
    <property type="entry name" value="YjgF-like"/>
    <property type="match status" value="1"/>
</dbReference>
<dbReference type="PROSITE" id="PS01094">
    <property type="entry name" value="UPF0076"/>
    <property type="match status" value="1"/>
</dbReference>
<gene>
    <name evidence="1" type="primary">rutC</name>
    <name type="ordered locus">ECED1_1166</name>
</gene>
<protein>
    <recommendedName>
        <fullName evidence="1">3-aminoacrylate deaminase RutC</fullName>
        <shortName evidence="1">3-AA deaminase</shortName>
        <ecNumber evidence="1">3.5.-.-</ecNumber>
    </recommendedName>
</protein>
<proteinExistence type="inferred from homology"/>
<feature type="chain" id="PRO_0000402748" description="3-aminoacrylate deaminase RutC">
    <location>
        <begin position="1"/>
        <end position="128"/>
    </location>
</feature>
<accession>B7MTF3</accession>
<keyword id="KW-0378">Hydrolase</keyword>
<name>RUTC_ECO81</name>
<organism>
    <name type="scientific">Escherichia coli O81 (strain ED1a)</name>
    <dbReference type="NCBI Taxonomy" id="585397"/>
    <lineage>
        <taxon>Bacteria</taxon>
        <taxon>Pseudomonadati</taxon>
        <taxon>Pseudomonadota</taxon>
        <taxon>Gammaproteobacteria</taxon>
        <taxon>Enterobacterales</taxon>
        <taxon>Enterobacteriaceae</taxon>
        <taxon>Escherichia</taxon>
    </lineage>
</organism>
<evidence type="ECO:0000255" key="1">
    <source>
        <dbReference type="HAMAP-Rule" id="MF_00831"/>
    </source>
</evidence>
<comment type="function">
    <text evidence="1">Involved in pyrimidine catabolism. Catalyzes the deamination of 3-aminoacrylate to malonic semialdehyde, a reaction that can also occur spontaneously. RutC may facilitate the reaction and modulate the metabolic fitness, rather than catalyzing essential functions.</text>
</comment>
<comment type="catalytic activity">
    <reaction evidence="1">
        <text>(Z)-3-aminoacrylate + H2O + H(+) = 3-oxopropanoate + NH4(+)</text>
        <dbReference type="Rhea" id="RHEA:34947"/>
        <dbReference type="ChEBI" id="CHEBI:15377"/>
        <dbReference type="ChEBI" id="CHEBI:15378"/>
        <dbReference type="ChEBI" id="CHEBI:28938"/>
        <dbReference type="ChEBI" id="CHEBI:33190"/>
        <dbReference type="ChEBI" id="CHEBI:59894"/>
    </reaction>
</comment>
<comment type="subunit">
    <text evidence="1">Homotrimer.</text>
</comment>
<comment type="similarity">
    <text evidence="1">Belongs to the RutC family.</text>
</comment>
<sequence length="128" mass="13763">MPKSVIIPAGSSAPLAPFVPGTLADGVVYVSGTLAFDQHNNVLFADDPKAQTRHVLETIRKVIETAGGTMADVTFNSIFITDWKNYAAINEIYAEFFPGDKPARFCIQCGLVKPDALVEIATIAHIAK</sequence>
<reference key="1">
    <citation type="journal article" date="2009" name="PLoS Genet.">
        <title>Organised genome dynamics in the Escherichia coli species results in highly diverse adaptive paths.</title>
        <authorList>
            <person name="Touchon M."/>
            <person name="Hoede C."/>
            <person name="Tenaillon O."/>
            <person name="Barbe V."/>
            <person name="Baeriswyl S."/>
            <person name="Bidet P."/>
            <person name="Bingen E."/>
            <person name="Bonacorsi S."/>
            <person name="Bouchier C."/>
            <person name="Bouvet O."/>
            <person name="Calteau A."/>
            <person name="Chiapello H."/>
            <person name="Clermont O."/>
            <person name="Cruveiller S."/>
            <person name="Danchin A."/>
            <person name="Diard M."/>
            <person name="Dossat C."/>
            <person name="Karoui M.E."/>
            <person name="Frapy E."/>
            <person name="Garry L."/>
            <person name="Ghigo J.M."/>
            <person name="Gilles A.M."/>
            <person name="Johnson J."/>
            <person name="Le Bouguenec C."/>
            <person name="Lescat M."/>
            <person name="Mangenot S."/>
            <person name="Martinez-Jehanne V."/>
            <person name="Matic I."/>
            <person name="Nassif X."/>
            <person name="Oztas S."/>
            <person name="Petit M.A."/>
            <person name="Pichon C."/>
            <person name="Rouy Z."/>
            <person name="Ruf C.S."/>
            <person name="Schneider D."/>
            <person name="Tourret J."/>
            <person name="Vacherie B."/>
            <person name="Vallenet D."/>
            <person name="Medigue C."/>
            <person name="Rocha E.P.C."/>
            <person name="Denamur E."/>
        </authorList>
    </citation>
    <scope>NUCLEOTIDE SEQUENCE [LARGE SCALE GENOMIC DNA]</scope>
    <source>
        <strain>ED1a</strain>
    </source>
</reference>